<keyword id="KW-0027">Amidation</keyword>
<keyword id="KW-0878">Amphibian defense peptide</keyword>
<keyword id="KW-0044">Antibiotic</keyword>
<keyword id="KW-0929">Antimicrobial</keyword>
<keyword id="KW-0204">Cytolysis</keyword>
<keyword id="KW-0903">Direct protein sequencing</keyword>
<keyword id="KW-0295">Fungicide</keyword>
<keyword id="KW-0354">Hemolysis</keyword>
<keyword id="KW-1185">Reference proteome</keyword>
<keyword id="KW-0964">Secreted</keyword>
<proteinExistence type="evidence at protein level"/>
<accession>P84385</accession>
<evidence type="ECO:0000269" key="1">
    <source>
    </source>
</evidence>
<evidence type="ECO:0000305" key="2"/>
<protein>
    <recommendedName>
        <fullName>Antimicrobial peptide 5</fullName>
    </recommendedName>
    <alternativeName>
        <fullName>PGLa-like peptide</fullName>
    </alternativeName>
    <alternativeName>
        <fullName>XT-5</fullName>
    </alternativeName>
</protein>
<sequence length="22" mass="1999">GMATKAGTALGKVAKAVIGAAL</sequence>
<feature type="peptide" id="PRO_0000043901" description="Antimicrobial peptide 5">
    <location>
        <begin position="1"/>
        <end position="22"/>
    </location>
</feature>
<feature type="modified residue" description="Leucine amide" evidence="1">
    <location>
        <position position="22"/>
    </location>
</feature>
<comment type="function">
    <text evidence="1">Has very strong antimicrobial activity against Gram-positive bacterium S.aureus, Gram-negative bacterium E.coli and yeast C.albicans. Has strong hemolytic activity against human red blood cells.</text>
</comment>
<comment type="subcellular location">
    <subcellularLocation>
        <location evidence="1">Secreted</location>
    </subcellularLocation>
</comment>
<comment type="tissue specificity">
    <text evidence="1">Skin.</text>
</comment>
<comment type="mass spectrometry" mass="1998.0" error="0.4" method="Electrospray" evidence="1"/>
<comment type="similarity">
    <text evidence="2">Belongs to the gastrin/cholecystokinin family.</text>
</comment>
<name>XT5_XENTR</name>
<dbReference type="InParanoid" id="P84385"/>
<dbReference type="Proteomes" id="UP000008143">
    <property type="component" value="Unplaced"/>
</dbReference>
<dbReference type="GO" id="GO:0005576">
    <property type="term" value="C:extracellular region"/>
    <property type="evidence" value="ECO:0000314"/>
    <property type="project" value="UniProtKB"/>
</dbReference>
<dbReference type="GO" id="GO:0050832">
    <property type="term" value="P:defense response to fungus"/>
    <property type="evidence" value="ECO:0000314"/>
    <property type="project" value="UniProtKB"/>
</dbReference>
<dbReference type="GO" id="GO:0050829">
    <property type="term" value="P:defense response to Gram-negative bacterium"/>
    <property type="evidence" value="ECO:0000314"/>
    <property type="project" value="UniProtKB"/>
</dbReference>
<dbReference type="GO" id="GO:0050830">
    <property type="term" value="P:defense response to Gram-positive bacterium"/>
    <property type="evidence" value="ECO:0000314"/>
    <property type="project" value="UniProtKB"/>
</dbReference>
<dbReference type="GO" id="GO:0044179">
    <property type="term" value="P:hemolysis in another organism"/>
    <property type="evidence" value="ECO:0000314"/>
    <property type="project" value="UniProtKB"/>
</dbReference>
<reference evidence="2" key="1">
    <citation type="journal article" date="2001" name="Biochim. Biophys. Acta">
        <title>Antimicrobial peptides isolated from skin secretions of the diploid frog, Xenopus tropicalis (Pipidae).</title>
        <authorList>
            <person name="Ali M.F."/>
            <person name="Soto A."/>
            <person name="Knoop F.C."/>
            <person name="Conlon J.M."/>
        </authorList>
    </citation>
    <scope>PROTEIN SEQUENCE</scope>
    <scope>FUNCTION</scope>
    <scope>SUBCELLULAR LOCATION</scope>
    <scope>TISSUE SPECIFICITY</scope>
    <scope>AMIDATION AT LEU-22</scope>
    <scope>MASS SPECTROMETRY</scope>
    <source>
        <tissue evidence="1">Skin secretion</tissue>
    </source>
</reference>
<organism>
    <name type="scientific">Xenopus tropicalis</name>
    <name type="common">Western clawed frog</name>
    <name type="synonym">Silurana tropicalis</name>
    <dbReference type="NCBI Taxonomy" id="8364"/>
    <lineage>
        <taxon>Eukaryota</taxon>
        <taxon>Metazoa</taxon>
        <taxon>Chordata</taxon>
        <taxon>Craniata</taxon>
        <taxon>Vertebrata</taxon>
        <taxon>Euteleostomi</taxon>
        <taxon>Amphibia</taxon>
        <taxon>Batrachia</taxon>
        <taxon>Anura</taxon>
        <taxon>Pipoidea</taxon>
        <taxon>Pipidae</taxon>
        <taxon>Xenopodinae</taxon>
        <taxon>Xenopus</taxon>
        <taxon>Silurana</taxon>
    </lineage>
</organism>